<comment type="function">
    <text evidence="1">Involved in the final reduction of the elongation cycle of fatty acid synthesis (FAS II). Catalyzes the reduction of a carbon-carbon double bond in an enoyl moiety that is covalently linked to an acyl carrier protein (ACP).</text>
</comment>
<comment type="catalytic activity">
    <reaction evidence="1">
        <text>a 2,3-saturated acyl-[ACP] + NAD(+) = a (2E)-enoyl-[ACP] + NADH + H(+)</text>
        <dbReference type="Rhea" id="RHEA:10240"/>
        <dbReference type="Rhea" id="RHEA-COMP:9925"/>
        <dbReference type="Rhea" id="RHEA-COMP:9926"/>
        <dbReference type="ChEBI" id="CHEBI:15378"/>
        <dbReference type="ChEBI" id="CHEBI:57540"/>
        <dbReference type="ChEBI" id="CHEBI:57945"/>
        <dbReference type="ChEBI" id="CHEBI:78784"/>
        <dbReference type="ChEBI" id="CHEBI:78785"/>
        <dbReference type="EC" id="1.3.1.9"/>
    </reaction>
</comment>
<comment type="pathway">
    <text evidence="1">Lipid metabolism; fatty acid biosynthesis.</text>
</comment>
<comment type="subunit">
    <text evidence="1">Monomer.</text>
</comment>
<comment type="similarity">
    <text evidence="1">Belongs to the TER reductase family.</text>
</comment>
<reference key="1">
    <citation type="submission" date="2006-03" db="EMBL/GenBank/DDBJ databases">
        <title>Complete sequence of Shewanella denitrificans OS217.</title>
        <authorList>
            <consortium name="US DOE Joint Genome Institute"/>
            <person name="Copeland A."/>
            <person name="Lucas S."/>
            <person name="Lapidus A."/>
            <person name="Barry K."/>
            <person name="Detter J.C."/>
            <person name="Glavina del Rio T."/>
            <person name="Hammon N."/>
            <person name="Israni S."/>
            <person name="Dalin E."/>
            <person name="Tice H."/>
            <person name="Pitluck S."/>
            <person name="Brettin T."/>
            <person name="Bruce D."/>
            <person name="Han C."/>
            <person name="Tapia R."/>
            <person name="Gilna P."/>
            <person name="Kiss H."/>
            <person name="Schmutz J."/>
            <person name="Larimer F."/>
            <person name="Land M."/>
            <person name="Hauser L."/>
            <person name="Kyrpides N."/>
            <person name="Lykidis A."/>
            <person name="Richardson P."/>
        </authorList>
    </citation>
    <scope>NUCLEOTIDE SEQUENCE [LARGE SCALE GENOMIC DNA]</scope>
    <source>
        <strain>OS217 / ATCC BAA-1090 / DSM 15013</strain>
    </source>
</reference>
<dbReference type="EC" id="1.3.1.9" evidence="1"/>
<dbReference type="EMBL" id="CP000302">
    <property type="protein sequence ID" value="ABE55767.1"/>
    <property type="molecule type" value="Genomic_DNA"/>
</dbReference>
<dbReference type="RefSeq" id="WP_011496918.1">
    <property type="nucleotide sequence ID" value="NC_007954.1"/>
</dbReference>
<dbReference type="SMR" id="Q12LA9"/>
<dbReference type="STRING" id="318161.Sden_2487"/>
<dbReference type="KEGG" id="sdn:Sden_2487"/>
<dbReference type="eggNOG" id="COG3007">
    <property type="taxonomic scope" value="Bacteria"/>
</dbReference>
<dbReference type="HOGENOM" id="CLU_057698_1_0_6"/>
<dbReference type="OrthoDB" id="9802260at2"/>
<dbReference type="UniPathway" id="UPA00094"/>
<dbReference type="Proteomes" id="UP000001982">
    <property type="component" value="Chromosome"/>
</dbReference>
<dbReference type="GO" id="GO:0004318">
    <property type="term" value="F:enoyl-[acyl-carrier-protein] reductase (NADH) activity"/>
    <property type="evidence" value="ECO:0007669"/>
    <property type="project" value="UniProtKB-UniRule"/>
</dbReference>
<dbReference type="GO" id="GO:0051287">
    <property type="term" value="F:NAD binding"/>
    <property type="evidence" value="ECO:0007669"/>
    <property type="project" value="UniProtKB-UniRule"/>
</dbReference>
<dbReference type="GO" id="GO:0050343">
    <property type="term" value="F:trans-2-enoyl-CoA reductase (NADH) activity"/>
    <property type="evidence" value="ECO:0007669"/>
    <property type="project" value="TreeGrafter"/>
</dbReference>
<dbReference type="GO" id="GO:0006633">
    <property type="term" value="P:fatty acid biosynthetic process"/>
    <property type="evidence" value="ECO:0007669"/>
    <property type="project" value="UniProtKB-UniRule"/>
</dbReference>
<dbReference type="FunFam" id="3.40.50.720:FF:000221">
    <property type="entry name" value="Enoyl-[acyl-carrier-protein] reductase [NADH]"/>
    <property type="match status" value="1"/>
</dbReference>
<dbReference type="Gene3D" id="3.40.50.720">
    <property type="entry name" value="NAD(P)-binding Rossmann-like Domain"/>
    <property type="match status" value="1"/>
</dbReference>
<dbReference type="HAMAP" id="MF_01838">
    <property type="entry name" value="FabV_reductase"/>
    <property type="match status" value="1"/>
</dbReference>
<dbReference type="InterPro" id="IPR024906">
    <property type="entry name" value="Eno_Rdtase_FAD-bd_dom"/>
</dbReference>
<dbReference type="InterPro" id="IPR024910">
    <property type="entry name" value="Enoyl-CoA_Rdtase_cat_dom"/>
</dbReference>
<dbReference type="InterPro" id="IPR050048">
    <property type="entry name" value="FabV-like_NADH_b"/>
</dbReference>
<dbReference type="InterPro" id="IPR010758">
    <property type="entry name" value="Trans-2-enoyl-CoA_reductase"/>
</dbReference>
<dbReference type="NCBIfam" id="NF043048">
    <property type="entry name" value="EnoyACPredFabV"/>
    <property type="match status" value="1"/>
</dbReference>
<dbReference type="NCBIfam" id="NF010177">
    <property type="entry name" value="PRK13656.1"/>
    <property type="match status" value="1"/>
</dbReference>
<dbReference type="PANTHER" id="PTHR37480">
    <property type="entry name" value="ENOYL-[ACYL-CARRIER-PROTEIN] REDUCTASE [NADH]"/>
    <property type="match status" value="1"/>
</dbReference>
<dbReference type="PANTHER" id="PTHR37480:SF1">
    <property type="entry name" value="ENOYL-[ACYL-CARRIER-PROTEIN] REDUCTASE [NADH]"/>
    <property type="match status" value="1"/>
</dbReference>
<dbReference type="Pfam" id="PF07055">
    <property type="entry name" value="Eno-Rase_FAD_bd"/>
    <property type="match status" value="1"/>
</dbReference>
<dbReference type="Pfam" id="PF12242">
    <property type="entry name" value="Eno-Rase_NADH_b"/>
    <property type="match status" value="1"/>
</dbReference>
<dbReference type="Pfam" id="PF12241">
    <property type="entry name" value="Enoyl_reductase"/>
    <property type="match status" value="1"/>
</dbReference>
<keyword id="KW-0275">Fatty acid biosynthesis</keyword>
<keyword id="KW-0276">Fatty acid metabolism</keyword>
<keyword id="KW-0444">Lipid biosynthesis</keyword>
<keyword id="KW-0443">Lipid metabolism</keyword>
<keyword id="KW-0520">NAD</keyword>
<keyword id="KW-0560">Oxidoreductase</keyword>
<keyword id="KW-1185">Reference proteome</keyword>
<proteinExistence type="inferred from homology"/>
<feature type="chain" id="PRO_1000070498" description="Enoyl-[acyl-carrier-protein] reductase [NADH]">
    <location>
        <begin position="1"/>
        <end position="400"/>
    </location>
</feature>
<feature type="active site" description="Proton donor" evidence="1">
    <location>
        <position position="235"/>
    </location>
</feature>
<feature type="binding site" evidence="1">
    <location>
        <begin position="48"/>
        <end position="53"/>
    </location>
    <ligand>
        <name>NAD(+)</name>
        <dbReference type="ChEBI" id="CHEBI:57540"/>
    </ligand>
</feature>
<feature type="binding site" evidence="1">
    <location>
        <begin position="74"/>
        <end position="75"/>
    </location>
    <ligand>
        <name>NAD(+)</name>
        <dbReference type="ChEBI" id="CHEBI:57540"/>
    </ligand>
</feature>
<feature type="binding site" evidence="1">
    <location>
        <begin position="111"/>
        <end position="112"/>
    </location>
    <ligand>
        <name>NAD(+)</name>
        <dbReference type="ChEBI" id="CHEBI:57540"/>
    </ligand>
</feature>
<feature type="binding site" evidence="1">
    <location>
        <begin position="139"/>
        <end position="140"/>
    </location>
    <ligand>
        <name>NAD(+)</name>
        <dbReference type="ChEBI" id="CHEBI:57540"/>
    </ligand>
</feature>
<feature type="binding site" evidence="1">
    <location>
        <position position="225"/>
    </location>
    <ligand>
        <name>substrate</name>
    </ligand>
</feature>
<feature type="binding site" evidence="1">
    <location>
        <position position="244"/>
    </location>
    <ligand>
        <name>NAD(+)</name>
        <dbReference type="ChEBI" id="CHEBI:57540"/>
    </ligand>
</feature>
<feature type="binding site" evidence="1">
    <location>
        <begin position="273"/>
        <end position="275"/>
    </location>
    <ligand>
        <name>NAD(+)</name>
        <dbReference type="ChEBI" id="CHEBI:57540"/>
    </ligand>
</feature>
<feature type="site" description="Plays an important role in discriminating NADH against NADPH" evidence="1">
    <location>
        <position position="75"/>
    </location>
</feature>
<sequence>MIIKPKIRGFICTTTHPVGCEANVKEQIELTKAKGKIANGPKRVLVVGSSSGYGLSSRIAAAFGSDAATLGVFFEKPSSETKPGTAGWYNTAAFDKFAKAEGLYSKSINCDAFSHEAKKKAIELIKEDLGQVDMVVYSLASPVRKLPDSGELIRSSLKPIGETYTATAVDTNKDCIIQTSVEPATEQEIADTVTVMGGEDWELWINALSDAGVLSDNCKTVAYSYIGTELTWPIYWHGALGKAKMDLDRAAHALNDKLAVKGGSANVAVLKSVVTQASSAIPVMPLYIAMVFKKMRQEGLHEGCMDQIYRMFSERLYRTDGAAPATDDKQRLRLDDWELREDIQQHCRDLWPQVTTENLSELADYMEYKAEFLKLFGFGIEGIDYDADVNPNVSFDVIEL</sequence>
<protein>
    <recommendedName>
        <fullName evidence="1">Enoyl-[acyl-carrier-protein] reductase [NADH]</fullName>
        <shortName evidence="1">ENR</shortName>
        <ecNumber evidence="1">1.3.1.9</ecNumber>
    </recommendedName>
</protein>
<accession>Q12LA9</accession>
<organism>
    <name type="scientific">Shewanella denitrificans (strain OS217 / ATCC BAA-1090 / DSM 15013)</name>
    <dbReference type="NCBI Taxonomy" id="318161"/>
    <lineage>
        <taxon>Bacteria</taxon>
        <taxon>Pseudomonadati</taxon>
        <taxon>Pseudomonadota</taxon>
        <taxon>Gammaproteobacteria</taxon>
        <taxon>Alteromonadales</taxon>
        <taxon>Shewanellaceae</taxon>
        <taxon>Shewanella</taxon>
    </lineage>
</organism>
<name>FABV_SHEDO</name>
<gene>
    <name evidence="1" type="primary">fabV</name>
    <name type="ordered locus">Sden_2487</name>
</gene>
<evidence type="ECO:0000255" key="1">
    <source>
        <dbReference type="HAMAP-Rule" id="MF_01838"/>
    </source>
</evidence>